<proteinExistence type="evidence at protein level"/>
<feature type="signal peptide" evidence="7">
    <location>
        <begin position="1"/>
        <end position="25"/>
    </location>
</feature>
<feature type="chain" id="PRO_0000003561" description="Otolin-1">
    <location>
        <begin position="26"/>
        <end position="508"/>
    </location>
</feature>
<feature type="domain" description="Collagen-like">
    <location>
        <begin position="144"/>
        <end position="367"/>
    </location>
</feature>
<feature type="domain" description="C1q" evidence="5">
    <location>
        <begin position="371"/>
        <end position="508"/>
    </location>
</feature>
<feature type="region of interest" description="Disordered" evidence="6">
    <location>
        <begin position="24"/>
        <end position="94"/>
    </location>
</feature>
<feature type="region of interest" description="Disordered" evidence="6">
    <location>
        <begin position="142"/>
        <end position="371"/>
    </location>
</feature>
<feature type="compositionally biased region" description="Gly residues" evidence="6">
    <location>
        <begin position="42"/>
        <end position="54"/>
    </location>
</feature>
<feature type="compositionally biased region" description="Polar residues" evidence="6">
    <location>
        <begin position="62"/>
        <end position="75"/>
    </location>
</feature>
<feature type="compositionally biased region" description="Low complexity" evidence="6">
    <location>
        <begin position="170"/>
        <end position="182"/>
    </location>
</feature>
<feature type="compositionally biased region" description="Basic and acidic residues" evidence="6">
    <location>
        <begin position="188"/>
        <end position="197"/>
    </location>
</feature>
<feature type="compositionally biased region" description="Basic and acidic residues" evidence="6">
    <location>
        <begin position="212"/>
        <end position="226"/>
    </location>
</feature>
<feature type="compositionally biased region" description="Gly residues" evidence="6">
    <location>
        <begin position="326"/>
        <end position="341"/>
    </location>
</feature>
<feature type="glycosylation site" description="N-linked (GlcNAc...) asparagine" evidence="4">
    <location>
        <position position="121"/>
    </location>
</feature>
<feature type="glycosylation site" description="N-linked (GlcNAc...) asparagine" evidence="4">
    <location>
        <position position="416"/>
    </location>
</feature>
<evidence type="ECO:0000250" key="1">
    <source>
        <dbReference type="UniProtKB" id="A0A060WQA3"/>
    </source>
</evidence>
<evidence type="ECO:0000250" key="2">
    <source>
        <dbReference type="UniProtKB" id="A5PN28"/>
    </source>
</evidence>
<evidence type="ECO:0000250" key="3">
    <source>
        <dbReference type="UniProtKB" id="Q4ZJM7"/>
    </source>
</evidence>
<evidence type="ECO:0000255" key="4"/>
<evidence type="ECO:0000255" key="5">
    <source>
        <dbReference type="PROSITE-ProRule" id="PRU00368"/>
    </source>
</evidence>
<evidence type="ECO:0000256" key="6">
    <source>
        <dbReference type="SAM" id="MobiDB-lite"/>
    </source>
</evidence>
<evidence type="ECO:0000269" key="7">
    <source>
    </source>
</evidence>
<evidence type="ECO:0000303" key="8">
    <source>
    </source>
</evidence>
<evidence type="ECO:0000305" key="9"/>
<organism>
    <name type="scientific">Oncorhynchus keta</name>
    <name type="common">Chum salmon</name>
    <name type="synonym">Salmo keta</name>
    <dbReference type="NCBI Taxonomy" id="8018"/>
    <lineage>
        <taxon>Eukaryota</taxon>
        <taxon>Metazoa</taxon>
        <taxon>Chordata</taxon>
        <taxon>Craniata</taxon>
        <taxon>Vertebrata</taxon>
        <taxon>Euteleostomi</taxon>
        <taxon>Actinopterygii</taxon>
        <taxon>Neopterygii</taxon>
        <taxon>Teleostei</taxon>
        <taxon>Protacanthopterygii</taxon>
        <taxon>Salmoniformes</taxon>
        <taxon>Salmonidae</taxon>
        <taxon>Salmoninae</taxon>
        <taxon>Oncorhynchus</taxon>
    </lineage>
</organism>
<keyword id="KW-0106">Calcium</keyword>
<keyword id="KW-0176">Collagen</keyword>
<keyword id="KW-0903">Direct protein sequencing</keyword>
<keyword id="KW-1015">Disulfide bond</keyword>
<keyword id="KW-0272">Extracellular matrix</keyword>
<keyword id="KW-0325">Glycoprotein</keyword>
<keyword id="KW-0479">Metal-binding</keyword>
<keyword id="KW-0964">Secreted</keyword>
<keyword id="KW-0732">Signal</keyword>
<protein>
    <recommendedName>
        <fullName evidence="8">Otolin-1</fullName>
    </recommendedName>
</protein>
<name>OTOL1_ONCKE</name>
<accession>P83371</accession>
<gene>
    <name type="primary">otol1</name>
    <name type="synonym">oto1</name>
</gene>
<sequence length="508" mass="52138">MPSLRLLAILTTLLAVVLIATQSSATRTTRRPKPQNTKKPPRGGGTGGGGGGGDQPARLGFRQTTTTMAPSSSLGTDETTEDTMTDAYSLSPTDSTTYAGDAYPTEFHTDSMALPGAGMGNYTLDYSHCYLNVCECCPPEKGRGPPGERGPPGPGAERGLPGVPGEKGDVGLMGPPGLDGMPGATGLEGDKGDKGDQGDTGMPGAPGILGKEGPKGDLGPKGEKGETGLPGLKGDLGERGKPGWNGTQGEKGDLGKIGPAGPSGLTGPMGQNGQKGEMGECPTGEKGEKGEAGLPGPPGPRGLVGTPGVNGTNGLPGPVGLRGQLGSPGGKGEAGGRGPPGLRGMPGPKGEKGPKGPRGVRGPKGPQGETAEQIRSAFSVGLFPSKSFPPPGLPVKFDKILYNEEEHWDPMLSKFNCTHPGVYVFSYHITVRNRPLRAALVINGVKKLRTRDSLYGQDIDQASNLALLRLASGDQVWLETLRDWNGVYSSSEDDSTFTGFLLYADPKA</sequence>
<reference key="1">
    <citation type="journal article" date="2002" name="Eur. J. Biochem.">
        <title>Fish otolith contains a unique structural protein, otolin-1.</title>
        <authorList>
            <person name="Murayama E."/>
            <person name="Takagi Y."/>
            <person name="Ohira T."/>
            <person name="Davis J.G."/>
            <person name="Greene M.I."/>
            <person name="Nagasawa H."/>
        </authorList>
    </citation>
    <scope>NUCLEOTIDE SEQUENCE [MRNA]</scope>
    <scope>PROTEIN SEQUENCE OF 26-40 AND 452-482</scope>
    <scope>FUNCTION</scope>
    <scope>GLYCOSYLATION</scope>
    <scope>TISSUE SPECIFICITY</scope>
</reference>
<dbReference type="EMBL" id="AB067770">
    <property type="protein sequence ID" value="BAB84561.1"/>
    <property type="molecule type" value="mRNA"/>
</dbReference>
<dbReference type="SMR" id="P83371"/>
<dbReference type="GlyCosmos" id="P83371">
    <property type="glycosylation" value="2 sites, No reported glycans"/>
</dbReference>
<dbReference type="GO" id="GO:0005581">
    <property type="term" value="C:collagen trimer"/>
    <property type="evidence" value="ECO:0007669"/>
    <property type="project" value="UniProtKB-KW"/>
</dbReference>
<dbReference type="GO" id="GO:0005576">
    <property type="term" value="C:extracellular region"/>
    <property type="evidence" value="ECO:0000314"/>
    <property type="project" value="UniProtKB"/>
</dbReference>
<dbReference type="GO" id="GO:0005509">
    <property type="term" value="F:calcium ion binding"/>
    <property type="evidence" value="ECO:0000250"/>
    <property type="project" value="UniProtKB"/>
</dbReference>
<dbReference type="GO" id="GO:0045299">
    <property type="term" value="P:otolith mineralization"/>
    <property type="evidence" value="ECO:0000250"/>
    <property type="project" value="UniProtKB"/>
</dbReference>
<dbReference type="FunFam" id="2.60.120.40:FF:000001">
    <property type="entry name" value="Complement C1q B chain"/>
    <property type="match status" value="1"/>
</dbReference>
<dbReference type="Gene3D" id="2.60.120.40">
    <property type="match status" value="1"/>
</dbReference>
<dbReference type="InterPro" id="IPR001073">
    <property type="entry name" value="C1q_dom"/>
</dbReference>
<dbReference type="InterPro" id="IPR008160">
    <property type="entry name" value="Collagen"/>
</dbReference>
<dbReference type="InterPro" id="IPR050392">
    <property type="entry name" value="Collagen/C1q_domain"/>
</dbReference>
<dbReference type="InterPro" id="IPR008983">
    <property type="entry name" value="Tumour_necrosis_fac-like_dom"/>
</dbReference>
<dbReference type="PANTHER" id="PTHR15427">
    <property type="entry name" value="EMILIN ELASTIN MICROFIBRIL INTERFACE-LOCATED PROTEIN ELASTIN MICROFIBRIL INTERFACER"/>
    <property type="match status" value="1"/>
</dbReference>
<dbReference type="PANTHER" id="PTHR15427:SF51">
    <property type="entry name" value="OTOLIN 1"/>
    <property type="match status" value="1"/>
</dbReference>
<dbReference type="Pfam" id="PF00386">
    <property type="entry name" value="C1q"/>
    <property type="match status" value="1"/>
</dbReference>
<dbReference type="Pfam" id="PF01391">
    <property type="entry name" value="Collagen"/>
    <property type="match status" value="4"/>
</dbReference>
<dbReference type="PRINTS" id="PR00007">
    <property type="entry name" value="COMPLEMNTC1Q"/>
</dbReference>
<dbReference type="SMART" id="SM00110">
    <property type="entry name" value="C1Q"/>
    <property type="match status" value="1"/>
</dbReference>
<dbReference type="SUPFAM" id="SSF49842">
    <property type="entry name" value="TNF-like"/>
    <property type="match status" value="1"/>
</dbReference>
<dbReference type="PROSITE" id="PS50871">
    <property type="entry name" value="C1Q"/>
    <property type="match status" value="1"/>
</dbReference>
<comment type="function">
    <text evidence="2 7">Collagen-like protein, which provides an organic scaffold for otoliths onto the sensory epithelium of the inner ear (PubMed:11856329). Acts as a scaffold for biomineralization by sequestering calcium (By similarity).</text>
</comment>
<comment type="subunit">
    <text evidence="1 2">Homooligomer; disulfide-linked; probably forms homotrimers (By similarity). Interacts with otomp (By similarity).</text>
</comment>
<comment type="subcellular location">
    <subcellularLocation>
        <location evidence="3">Secreted</location>
        <location evidence="3">Extracellular space</location>
        <location evidence="3">Extracellular matrix</location>
    </subcellularLocation>
    <text evidence="3">Localized in both the surrounding otoconial matrix and otoconia.</text>
</comment>
<comment type="tissue specificity">
    <text evidence="7">Selectively expressed in the sacculus where it is localized to the otolith, the gelatinous layer of the otolithic membrane, and part of the transitional epithelium.</text>
</comment>
<comment type="domain">
    <text evidence="2">The C1q domain mediates calcium-binding.</text>
</comment>
<comment type="PTM">
    <text evidence="7">N-glycosylated.</text>
</comment>
<comment type="similarity">
    <text evidence="9">Belongs to the OTOL1 family.</text>
</comment>